<gene>
    <name evidence="1" type="primary">rplL</name>
    <name type="ordered locus">Noc_2332</name>
</gene>
<proteinExistence type="inferred from homology"/>
<organism>
    <name type="scientific">Nitrosococcus oceani (strain ATCC 19707 / BCRC 17464 / JCM 30415 / NCIMB 11848 / C-107)</name>
    <dbReference type="NCBI Taxonomy" id="323261"/>
    <lineage>
        <taxon>Bacteria</taxon>
        <taxon>Pseudomonadati</taxon>
        <taxon>Pseudomonadota</taxon>
        <taxon>Gammaproteobacteria</taxon>
        <taxon>Chromatiales</taxon>
        <taxon>Chromatiaceae</taxon>
        <taxon>Nitrosococcus</taxon>
    </lineage>
</organism>
<keyword id="KW-1185">Reference proteome</keyword>
<keyword id="KW-0687">Ribonucleoprotein</keyword>
<keyword id="KW-0689">Ribosomal protein</keyword>
<dbReference type="EMBL" id="CP000127">
    <property type="protein sequence ID" value="ABA58790.1"/>
    <property type="molecule type" value="Genomic_DNA"/>
</dbReference>
<dbReference type="RefSeq" id="WP_002810165.1">
    <property type="nucleotide sequence ID" value="NC_007484.1"/>
</dbReference>
<dbReference type="SMR" id="Q3J8Q6"/>
<dbReference type="FunCoup" id="Q3J8Q6">
    <property type="interactions" value="677"/>
</dbReference>
<dbReference type="STRING" id="323261.Noc_2332"/>
<dbReference type="KEGG" id="noc:Noc_2332"/>
<dbReference type="eggNOG" id="COG0222">
    <property type="taxonomic scope" value="Bacteria"/>
</dbReference>
<dbReference type="HOGENOM" id="CLU_086499_3_2_6"/>
<dbReference type="InParanoid" id="Q3J8Q6"/>
<dbReference type="Proteomes" id="UP000006838">
    <property type="component" value="Chromosome"/>
</dbReference>
<dbReference type="GO" id="GO:0022625">
    <property type="term" value="C:cytosolic large ribosomal subunit"/>
    <property type="evidence" value="ECO:0007669"/>
    <property type="project" value="TreeGrafter"/>
</dbReference>
<dbReference type="GO" id="GO:0003729">
    <property type="term" value="F:mRNA binding"/>
    <property type="evidence" value="ECO:0007669"/>
    <property type="project" value="TreeGrafter"/>
</dbReference>
<dbReference type="GO" id="GO:0003735">
    <property type="term" value="F:structural constituent of ribosome"/>
    <property type="evidence" value="ECO:0007669"/>
    <property type="project" value="InterPro"/>
</dbReference>
<dbReference type="GO" id="GO:0006412">
    <property type="term" value="P:translation"/>
    <property type="evidence" value="ECO:0007669"/>
    <property type="project" value="UniProtKB-UniRule"/>
</dbReference>
<dbReference type="CDD" id="cd00387">
    <property type="entry name" value="Ribosomal_L7_L12"/>
    <property type="match status" value="1"/>
</dbReference>
<dbReference type="FunFam" id="3.30.1390.10:FF:000001">
    <property type="entry name" value="50S ribosomal protein L7/L12"/>
    <property type="match status" value="1"/>
</dbReference>
<dbReference type="Gene3D" id="3.30.1390.10">
    <property type="match status" value="1"/>
</dbReference>
<dbReference type="Gene3D" id="1.20.5.710">
    <property type="entry name" value="Single helix bin"/>
    <property type="match status" value="1"/>
</dbReference>
<dbReference type="HAMAP" id="MF_00368">
    <property type="entry name" value="Ribosomal_bL12"/>
    <property type="match status" value="1"/>
</dbReference>
<dbReference type="InterPro" id="IPR000206">
    <property type="entry name" value="Ribosomal_bL12"/>
</dbReference>
<dbReference type="InterPro" id="IPR013823">
    <property type="entry name" value="Ribosomal_bL12_C"/>
</dbReference>
<dbReference type="InterPro" id="IPR014719">
    <property type="entry name" value="Ribosomal_bL12_C/ClpS-like"/>
</dbReference>
<dbReference type="InterPro" id="IPR008932">
    <property type="entry name" value="Ribosomal_bL12_oligo"/>
</dbReference>
<dbReference type="InterPro" id="IPR036235">
    <property type="entry name" value="Ribosomal_bL12_oligo_N_sf"/>
</dbReference>
<dbReference type="NCBIfam" id="TIGR00855">
    <property type="entry name" value="L12"/>
    <property type="match status" value="1"/>
</dbReference>
<dbReference type="PANTHER" id="PTHR45987">
    <property type="entry name" value="39S RIBOSOMAL PROTEIN L12"/>
    <property type="match status" value="1"/>
</dbReference>
<dbReference type="PANTHER" id="PTHR45987:SF4">
    <property type="entry name" value="LARGE RIBOSOMAL SUBUNIT PROTEIN BL12M"/>
    <property type="match status" value="1"/>
</dbReference>
<dbReference type="Pfam" id="PF00542">
    <property type="entry name" value="Ribosomal_L12"/>
    <property type="match status" value="1"/>
</dbReference>
<dbReference type="Pfam" id="PF16320">
    <property type="entry name" value="Ribosomal_L12_N"/>
    <property type="match status" value="1"/>
</dbReference>
<dbReference type="SUPFAM" id="SSF54736">
    <property type="entry name" value="ClpS-like"/>
    <property type="match status" value="1"/>
</dbReference>
<dbReference type="SUPFAM" id="SSF48300">
    <property type="entry name" value="Ribosomal protein L7/12, oligomerisation (N-terminal) domain"/>
    <property type="match status" value="1"/>
</dbReference>
<accession>Q3J8Q6</accession>
<reference key="1">
    <citation type="journal article" date="2006" name="Appl. Environ. Microbiol.">
        <title>Complete genome sequence of the marine, chemolithoautotrophic, ammonia-oxidizing bacterium Nitrosococcus oceani ATCC 19707.</title>
        <authorList>
            <person name="Klotz M.G."/>
            <person name="Arp D.J."/>
            <person name="Chain P.S.G."/>
            <person name="El-Sheikh A.F."/>
            <person name="Hauser L.J."/>
            <person name="Hommes N.G."/>
            <person name="Larimer F.W."/>
            <person name="Malfatti S.A."/>
            <person name="Norton J.M."/>
            <person name="Poret-Peterson A.T."/>
            <person name="Vergez L.M."/>
            <person name="Ward B.B."/>
        </authorList>
    </citation>
    <scope>NUCLEOTIDE SEQUENCE [LARGE SCALE GENOMIC DNA]</scope>
    <source>
        <strain>ATCC 19707 / BCRC 17464 / JCM 30415 / NCIMB 11848 / C-107</strain>
    </source>
</reference>
<comment type="function">
    <text evidence="1">Forms part of the ribosomal stalk which helps the ribosome interact with GTP-bound translation factors. Is thus essential for accurate translation.</text>
</comment>
<comment type="subunit">
    <text evidence="1">Homodimer. Part of the ribosomal stalk of the 50S ribosomal subunit. Forms a multimeric L10(L12)X complex, where L10 forms an elongated spine to which 2 to 4 L12 dimers bind in a sequential fashion. Binds GTP-bound translation factors.</text>
</comment>
<comment type="similarity">
    <text evidence="1">Belongs to the bacterial ribosomal protein bL12 family.</text>
</comment>
<feature type="chain" id="PRO_0000243452" description="Large ribosomal subunit protein bL12">
    <location>
        <begin position="1"/>
        <end position="126"/>
    </location>
</feature>
<evidence type="ECO:0000255" key="1">
    <source>
        <dbReference type="HAMAP-Rule" id="MF_00368"/>
    </source>
</evidence>
<evidence type="ECO:0000305" key="2"/>
<sequence>MAVAKEEILETISNMTVMDVVELIEAMEEKFGVSAAAPIAAAAPAAGAEAGAAAEEKTEFDVVLVSFGSNKVQVIKAVRSITSLGLKEAKDLVEGAPSPVKEGISKDEADEIKKQLEEAGASIEVK</sequence>
<name>RL7_NITOC</name>
<protein>
    <recommendedName>
        <fullName evidence="1">Large ribosomal subunit protein bL12</fullName>
    </recommendedName>
    <alternativeName>
        <fullName evidence="2">50S ribosomal protein L7/L12</fullName>
    </alternativeName>
</protein>